<comment type="function">
    <text evidence="1">Excises uracil residues from the DNA which can arise as a result of misincorporation of dUMP residues by DNA polymerase or due to deamination of cytosine.</text>
</comment>
<comment type="catalytic activity">
    <reaction evidence="1">
        <text>Hydrolyzes single-stranded DNA or mismatched double-stranded DNA and polynucleotides, releasing free uracil.</text>
        <dbReference type="EC" id="3.2.2.27"/>
    </reaction>
</comment>
<comment type="subcellular location">
    <subcellularLocation>
        <location evidence="1">Cytoplasm</location>
    </subcellularLocation>
</comment>
<comment type="similarity">
    <text evidence="1">Belongs to the uracil-DNA glycosylase (UDG) superfamily. UNG family.</text>
</comment>
<reference key="1">
    <citation type="submission" date="2007-07" db="EMBL/GenBank/DDBJ databases">
        <title>Complete genome sequence of Campylobacter jejuni subsp doylei 269.97 isolated from human blood.</title>
        <authorList>
            <person name="Fouts D.E."/>
            <person name="Mongodin E.F."/>
            <person name="Puiu D."/>
            <person name="Sebastian Y."/>
            <person name="Miller W.G."/>
            <person name="Mandrell R.E."/>
            <person name="Lastovica A.J."/>
            <person name="Nelson K.E."/>
        </authorList>
    </citation>
    <scope>NUCLEOTIDE SEQUENCE [LARGE SCALE GENOMIC DNA]</scope>
    <source>
        <strain>ATCC BAA-1458 / RM4099 / 269.97</strain>
    </source>
</reference>
<proteinExistence type="inferred from homology"/>
<dbReference type="EC" id="3.2.2.27" evidence="1"/>
<dbReference type="EMBL" id="CP000768">
    <property type="protein sequence ID" value="ABS43724.1"/>
    <property type="molecule type" value="Genomic_DNA"/>
</dbReference>
<dbReference type="SMR" id="A7H1G3"/>
<dbReference type="KEGG" id="cjd:JJD26997_0093"/>
<dbReference type="HOGENOM" id="CLU_032162_1_1_7"/>
<dbReference type="Proteomes" id="UP000002302">
    <property type="component" value="Chromosome"/>
</dbReference>
<dbReference type="GO" id="GO:0005737">
    <property type="term" value="C:cytoplasm"/>
    <property type="evidence" value="ECO:0007669"/>
    <property type="project" value="UniProtKB-SubCell"/>
</dbReference>
<dbReference type="GO" id="GO:0004844">
    <property type="term" value="F:uracil DNA N-glycosylase activity"/>
    <property type="evidence" value="ECO:0007669"/>
    <property type="project" value="UniProtKB-UniRule"/>
</dbReference>
<dbReference type="GO" id="GO:0097510">
    <property type="term" value="P:base-excision repair, AP site formation via deaminated base removal"/>
    <property type="evidence" value="ECO:0007669"/>
    <property type="project" value="TreeGrafter"/>
</dbReference>
<dbReference type="CDD" id="cd10027">
    <property type="entry name" value="UDG-F1-like"/>
    <property type="match status" value="1"/>
</dbReference>
<dbReference type="FunFam" id="3.40.470.10:FF:000001">
    <property type="entry name" value="Uracil-DNA glycosylase"/>
    <property type="match status" value="1"/>
</dbReference>
<dbReference type="Gene3D" id="3.40.470.10">
    <property type="entry name" value="Uracil-DNA glycosylase-like domain"/>
    <property type="match status" value="1"/>
</dbReference>
<dbReference type="HAMAP" id="MF_00148">
    <property type="entry name" value="UDG"/>
    <property type="match status" value="1"/>
</dbReference>
<dbReference type="InterPro" id="IPR002043">
    <property type="entry name" value="UDG_fam1"/>
</dbReference>
<dbReference type="InterPro" id="IPR018085">
    <property type="entry name" value="Ura-DNA_Glyclase_AS"/>
</dbReference>
<dbReference type="InterPro" id="IPR005122">
    <property type="entry name" value="Uracil-DNA_glycosylase-like"/>
</dbReference>
<dbReference type="InterPro" id="IPR036895">
    <property type="entry name" value="Uracil-DNA_glycosylase-like_sf"/>
</dbReference>
<dbReference type="NCBIfam" id="NF003588">
    <property type="entry name" value="PRK05254.1-1"/>
    <property type="match status" value="1"/>
</dbReference>
<dbReference type="NCBIfam" id="NF003589">
    <property type="entry name" value="PRK05254.1-2"/>
    <property type="match status" value="1"/>
</dbReference>
<dbReference type="NCBIfam" id="NF003591">
    <property type="entry name" value="PRK05254.1-4"/>
    <property type="match status" value="1"/>
</dbReference>
<dbReference type="NCBIfam" id="NF003592">
    <property type="entry name" value="PRK05254.1-5"/>
    <property type="match status" value="1"/>
</dbReference>
<dbReference type="NCBIfam" id="TIGR00628">
    <property type="entry name" value="ung"/>
    <property type="match status" value="1"/>
</dbReference>
<dbReference type="PANTHER" id="PTHR11264">
    <property type="entry name" value="URACIL-DNA GLYCOSYLASE"/>
    <property type="match status" value="1"/>
</dbReference>
<dbReference type="PANTHER" id="PTHR11264:SF0">
    <property type="entry name" value="URACIL-DNA GLYCOSYLASE"/>
    <property type="match status" value="1"/>
</dbReference>
<dbReference type="Pfam" id="PF03167">
    <property type="entry name" value="UDG"/>
    <property type="match status" value="1"/>
</dbReference>
<dbReference type="SMART" id="SM00986">
    <property type="entry name" value="UDG"/>
    <property type="match status" value="1"/>
</dbReference>
<dbReference type="SMART" id="SM00987">
    <property type="entry name" value="UreE_C"/>
    <property type="match status" value="1"/>
</dbReference>
<dbReference type="SUPFAM" id="SSF52141">
    <property type="entry name" value="Uracil-DNA glycosylase-like"/>
    <property type="match status" value="1"/>
</dbReference>
<dbReference type="PROSITE" id="PS00130">
    <property type="entry name" value="U_DNA_GLYCOSYLASE"/>
    <property type="match status" value="1"/>
</dbReference>
<evidence type="ECO:0000255" key="1">
    <source>
        <dbReference type="HAMAP-Rule" id="MF_00148"/>
    </source>
</evidence>
<accession>A7H1G3</accession>
<feature type="chain" id="PRO_1000009875" description="Uracil-DNA glycosylase">
    <location>
        <begin position="1"/>
        <end position="231"/>
    </location>
</feature>
<feature type="active site" description="Proton acceptor" evidence="1">
    <location>
        <position position="74"/>
    </location>
</feature>
<sequence length="231" mass="26377">MKEITINIDKIKINDDWKEFLRDEFQKKYFLEIKKQYLNAINQNIIIYPPANLIFNAFNLCPLKEIKIVILGQDPYHQENQAMGLSFSVPKNVKIPPSLNNIFKELQNDLNITPAKSGDLSFWAKQGVLLLNSILSVEANKAASHSSWGWQEFSDAVIHKLSNEKSGLVFMLWGNYAKSKEILIDNTKHLILKAAHPSPLARTGFLGCKHFSKANEFLKKVGKIPIDWKIV</sequence>
<protein>
    <recommendedName>
        <fullName evidence="1">Uracil-DNA glycosylase</fullName>
        <shortName evidence="1">UDG</shortName>
        <ecNumber evidence="1">3.2.2.27</ecNumber>
    </recommendedName>
</protein>
<gene>
    <name evidence="1" type="primary">ung</name>
    <name type="ordered locus">JJD26997_0093</name>
</gene>
<name>UNG_CAMJD</name>
<keyword id="KW-0963">Cytoplasm</keyword>
<keyword id="KW-0227">DNA damage</keyword>
<keyword id="KW-0234">DNA repair</keyword>
<keyword id="KW-0378">Hydrolase</keyword>
<organism>
    <name type="scientific">Campylobacter jejuni subsp. doylei (strain ATCC BAA-1458 / RM4099 / 269.97)</name>
    <dbReference type="NCBI Taxonomy" id="360109"/>
    <lineage>
        <taxon>Bacteria</taxon>
        <taxon>Pseudomonadati</taxon>
        <taxon>Campylobacterota</taxon>
        <taxon>Epsilonproteobacteria</taxon>
        <taxon>Campylobacterales</taxon>
        <taxon>Campylobacteraceae</taxon>
        <taxon>Campylobacter</taxon>
    </lineage>
</organism>